<feature type="chain" id="PRO_0000379878" description="Fibronectin type-III domain-containing protein 3a">
    <location>
        <begin position="1"/>
        <end position="1198"/>
    </location>
</feature>
<feature type="transmembrane region" description="Helical" evidence="1">
    <location>
        <begin position="1172"/>
        <end position="1192"/>
    </location>
</feature>
<feature type="domain" description="Fibronectin type-III 1" evidence="2">
    <location>
        <begin position="269"/>
        <end position="370"/>
    </location>
</feature>
<feature type="domain" description="Fibronectin type-III 2" evidence="2">
    <location>
        <begin position="374"/>
        <end position="466"/>
    </location>
</feature>
<feature type="domain" description="Fibronectin type-III 3" evidence="2">
    <location>
        <begin position="470"/>
        <end position="563"/>
    </location>
</feature>
<feature type="domain" description="Fibronectin type-III 4" evidence="2">
    <location>
        <begin position="567"/>
        <end position="661"/>
    </location>
</feature>
<feature type="domain" description="Fibronectin type-III 5" evidence="2">
    <location>
        <begin position="665"/>
        <end position="758"/>
    </location>
</feature>
<feature type="domain" description="Fibronectin type-III 6" evidence="2">
    <location>
        <begin position="762"/>
        <end position="852"/>
    </location>
</feature>
<feature type="domain" description="Fibronectin type-III 7" evidence="2">
    <location>
        <begin position="864"/>
        <end position="951"/>
    </location>
</feature>
<feature type="domain" description="Fibronectin type-III 8" evidence="2">
    <location>
        <begin position="952"/>
        <end position="1045"/>
    </location>
</feature>
<feature type="domain" description="Fibronectin type-III 9" evidence="2">
    <location>
        <begin position="1046"/>
        <end position="1151"/>
    </location>
</feature>
<feature type="region of interest" description="Disordered" evidence="3">
    <location>
        <begin position="189"/>
        <end position="256"/>
    </location>
</feature>
<feature type="region of interest" description="Disordered" evidence="3">
    <location>
        <begin position="553"/>
        <end position="574"/>
    </location>
</feature>
<feature type="compositionally biased region" description="Basic and acidic residues" evidence="3">
    <location>
        <begin position="189"/>
        <end position="201"/>
    </location>
</feature>
<feature type="compositionally biased region" description="Low complexity" evidence="3">
    <location>
        <begin position="229"/>
        <end position="247"/>
    </location>
</feature>
<proteinExistence type="evidence at transcript level"/>
<reference key="1">
    <citation type="journal article" date="2005" name="Genome Biol.">
        <title>Full-length cDNAs from chicken bursal lymphocytes to facilitate gene function analysis.</title>
        <authorList>
            <person name="Caldwell R.B."/>
            <person name="Kierzek A.M."/>
            <person name="Arakawa H."/>
            <person name="Bezzubov Y."/>
            <person name="Zaim J."/>
            <person name="Fiedler P."/>
            <person name="Kutter S."/>
            <person name="Blagodatski A."/>
            <person name="Kostovska D."/>
            <person name="Koter M."/>
            <person name="Plachy J."/>
            <person name="Carninci P."/>
            <person name="Hayashizaki Y."/>
            <person name="Buerstedde J.-M."/>
        </authorList>
    </citation>
    <scope>NUCLEOTIDE SEQUENCE [LARGE SCALE MRNA]</scope>
    <source>
        <strain>CB</strain>
        <tissue>Bursa of Fabricius</tissue>
    </source>
</reference>
<keyword id="KW-0333">Golgi apparatus</keyword>
<keyword id="KW-0472">Membrane</keyword>
<keyword id="KW-1185">Reference proteome</keyword>
<keyword id="KW-0677">Repeat</keyword>
<keyword id="KW-0812">Transmembrane</keyword>
<keyword id="KW-1133">Transmembrane helix</keyword>
<sequence length="1198" mass="131561">MAEHPPLLDTSSIISSEIPLLTSPIVSGDGAQQVILVQVNPGEAFTIRREDGQFQCITGPAQVPMMSPNGSVPTIYVPPGYAPQVIEDNGVRRVVVVPQAPEFHPGGHAVIHRPPHPPLPGFLPLPAMIPPPPRHIYSPVTGAGDMATQYIPQYHTSQMYGDLDTLPAHGRANFRDERSSKTYERLQKKLKDRHGTQKDKLNSPPSSPQKCPSPTSEPNGLTKGQDTAGISTGSTKSKSVGKGKSNSQTDVEIEEKDEETKALEALLSNIAKPVVSDVQARTALLMWSPPSIDVGEDTDKTNIPGVYTYEVMISNTGKDGKYKTVYIGEENKVTVNDLRPATDYHAKVQVECNCVKGSPSEVESFTTMSCEPDAPNLPRITNRTKNSLTLQWKASCDNGSKIHSYLLEWDEGKGNGEFCQCYYGQQKQYRITKLSPAMGYTFRLAAKNDMGMSGFSEEVLYHTSGTAATTPASPLLINAGVTWLSLQWTKPSGTPSDEGISYILEMEDENSGYGFKPKYDGDDLTYTVKNLRRSTKYKFRVIAYNSEGKSSPSETVDYTTCPDKPGAPSKPSVKGKIHAQSFKIIWDPPKDNGGAAINTYVVEISEGSNGNKWDTIYSGAAREHLCDRLNPGCSYRLRVYCIGEGGQSMASDSLLVQTPAVVPGPCQPPRLQGRPRAREIQLRWGPPQVDGGSPITCYGLEMFQTETDEHREVYQGSDVECTVGSLLPGRMYNFRLRAANKAGFGPYSEKCEITTAPGPPDQCKPPQVTCRSAACAQVSWEVPVSNGADVTEYRLEWGGMEGCMQISYCGPGLNCEMKGLLPATIYYCRVQAVNVAGAGPFSEVVACMTPASVPAVVTCLRGLSEDEVESPHYYPSTCLALSWEKPCDHGSEITGYSIDFGDKQPITVGKVLSYFIDGLQPDTTYRIRIQALNSLGAGPFSHTIKLKTKPLPPDPPRLECVAYSSQTLKLKWGEGTAKALTDSIQYHLQMEDKNGRFVSLYRGPCHTYKVQRLSESTSYKFCIQACNEAGEGPLSQEYVFTTPKSVPAALKAPRIERINDHTCEITWEVLQPMKGDPVIYCLQVMVGKDSEFKQIYKGPDWSFRYTGLQLNCEYRFRACAIRQCQETSGHQDLIGPYSSPVLFISQRTEPPTSTNKDTVQTTRTQWSQSDQVCAAVILALFAIFSILIAVIIQYFVIK</sequence>
<gene>
    <name type="primary">FNDC3A</name>
    <name type="synonym">FNDC3</name>
    <name type="ORF">RCJMB04_16k12</name>
</gene>
<comment type="subcellular location">
    <subcellularLocation>
        <location evidence="4">Golgi apparatus membrane</location>
        <topology evidence="4">Single-pass membrane protein</topology>
    </subcellularLocation>
</comment>
<comment type="similarity">
    <text evidence="4">Belongs to the FNDC3 family.</text>
</comment>
<comment type="sequence caution" evidence="4">
    <conflict type="erroneous initiation">
        <sequence resource="EMBL-CDS" id="CAG32048"/>
    </conflict>
</comment>
<organism>
    <name type="scientific">Gallus gallus</name>
    <name type="common">Chicken</name>
    <dbReference type="NCBI Taxonomy" id="9031"/>
    <lineage>
        <taxon>Eukaryota</taxon>
        <taxon>Metazoa</taxon>
        <taxon>Chordata</taxon>
        <taxon>Craniata</taxon>
        <taxon>Vertebrata</taxon>
        <taxon>Euteleostomi</taxon>
        <taxon>Archelosauria</taxon>
        <taxon>Archosauria</taxon>
        <taxon>Dinosauria</taxon>
        <taxon>Saurischia</taxon>
        <taxon>Theropoda</taxon>
        <taxon>Coelurosauria</taxon>
        <taxon>Aves</taxon>
        <taxon>Neognathae</taxon>
        <taxon>Galloanserae</taxon>
        <taxon>Galliformes</taxon>
        <taxon>Phasianidae</taxon>
        <taxon>Phasianinae</taxon>
        <taxon>Gallus</taxon>
    </lineage>
</organism>
<evidence type="ECO:0000255" key="1"/>
<evidence type="ECO:0000255" key="2">
    <source>
        <dbReference type="PROSITE-ProRule" id="PRU00316"/>
    </source>
</evidence>
<evidence type="ECO:0000256" key="3">
    <source>
        <dbReference type="SAM" id="MobiDB-lite"/>
    </source>
</evidence>
<evidence type="ECO:0000305" key="4"/>
<accession>Q5ZJP5</accession>
<name>FND3A_CHICK</name>
<protein>
    <recommendedName>
        <fullName>Fibronectin type-III domain-containing protein 3a</fullName>
    </recommendedName>
</protein>
<dbReference type="EMBL" id="AJ720389">
    <property type="protein sequence ID" value="CAG32048.1"/>
    <property type="status" value="ALT_INIT"/>
    <property type="molecule type" value="mRNA"/>
</dbReference>
<dbReference type="RefSeq" id="NP_001012844.1">
    <property type="nucleotide sequence ID" value="NM_001012826.2"/>
</dbReference>
<dbReference type="SMR" id="Q5ZJP5"/>
<dbReference type="FunCoup" id="Q5ZJP5">
    <property type="interactions" value="1076"/>
</dbReference>
<dbReference type="STRING" id="9031.ENSGALP00000056362"/>
<dbReference type="GlyGen" id="Q5ZJP5">
    <property type="glycosylation" value="1 site"/>
</dbReference>
<dbReference type="PaxDb" id="9031-ENSGALP00000027412"/>
<dbReference type="GeneID" id="418863"/>
<dbReference type="KEGG" id="gga:418863"/>
<dbReference type="CTD" id="22862"/>
<dbReference type="VEuPathDB" id="HostDB:geneid_418863"/>
<dbReference type="eggNOG" id="ENOG502QRT8">
    <property type="taxonomic scope" value="Eukaryota"/>
</dbReference>
<dbReference type="InParanoid" id="Q5ZJP5"/>
<dbReference type="OrthoDB" id="443915at2759"/>
<dbReference type="PhylomeDB" id="Q5ZJP5"/>
<dbReference type="PRO" id="PR:Q5ZJP5"/>
<dbReference type="Proteomes" id="UP000000539">
    <property type="component" value="Unassembled WGS sequence"/>
</dbReference>
<dbReference type="GO" id="GO:0000139">
    <property type="term" value="C:Golgi membrane"/>
    <property type="evidence" value="ECO:0007669"/>
    <property type="project" value="UniProtKB-SubCell"/>
</dbReference>
<dbReference type="CDD" id="cd00063">
    <property type="entry name" value="FN3"/>
    <property type="match status" value="9"/>
</dbReference>
<dbReference type="FunFam" id="2.60.40.10:FF:000175">
    <property type="entry name" value="Fibronectin type III domain containing 3A"/>
    <property type="match status" value="1"/>
</dbReference>
<dbReference type="FunFam" id="2.60.40.10:FF:000180">
    <property type="entry name" value="Fibronectin type III domain containing 3A"/>
    <property type="match status" value="1"/>
</dbReference>
<dbReference type="FunFam" id="2.60.40.10:FF:000185">
    <property type="entry name" value="Fibronectin type III domain containing 3A"/>
    <property type="match status" value="1"/>
</dbReference>
<dbReference type="FunFam" id="2.60.40.10:FF:000195">
    <property type="entry name" value="Fibronectin type III domain containing 3A"/>
    <property type="match status" value="1"/>
</dbReference>
<dbReference type="FunFam" id="2.60.40.10:FF:000210">
    <property type="entry name" value="Fibronectin type III domain containing 3A"/>
    <property type="match status" value="1"/>
</dbReference>
<dbReference type="FunFam" id="2.60.40.10:FF:000309">
    <property type="entry name" value="Fibronectin type III domain containing 3B"/>
    <property type="match status" value="1"/>
</dbReference>
<dbReference type="FunFam" id="2.60.40.10:FF:000366">
    <property type="entry name" value="fibronectin type-III domain-containing protein 3A isoform X1"/>
    <property type="match status" value="1"/>
</dbReference>
<dbReference type="FunFam" id="2.60.40.10:FF:000373">
    <property type="entry name" value="fibronectin type-III domain-containing protein 3A isoform X1"/>
    <property type="match status" value="1"/>
</dbReference>
<dbReference type="FunFam" id="2.60.40.10:FF:000337">
    <property type="entry name" value="fibronectin type-III domain-containing protein 3A isoform X2"/>
    <property type="match status" value="1"/>
</dbReference>
<dbReference type="Gene3D" id="2.60.40.10">
    <property type="entry name" value="Immunoglobulins"/>
    <property type="match status" value="9"/>
</dbReference>
<dbReference type="InterPro" id="IPR050617">
    <property type="entry name" value="E3_ligase_FN3/SPRY"/>
</dbReference>
<dbReference type="InterPro" id="IPR003961">
    <property type="entry name" value="FN3_dom"/>
</dbReference>
<dbReference type="InterPro" id="IPR036116">
    <property type="entry name" value="FN3_sf"/>
</dbReference>
<dbReference type="InterPro" id="IPR013783">
    <property type="entry name" value="Ig-like_fold"/>
</dbReference>
<dbReference type="PANTHER" id="PTHR24099">
    <property type="entry name" value="E3 UBIQUITIN-PROTEIN LIGASE TRIM36-RELATED"/>
    <property type="match status" value="1"/>
</dbReference>
<dbReference type="PANTHER" id="PTHR24099:SF14">
    <property type="entry name" value="FIBRONECTIN TYPE III DOMAIN CONTAINING 3C2-RELATED"/>
    <property type="match status" value="1"/>
</dbReference>
<dbReference type="Pfam" id="PF00041">
    <property type="entry name" value="fn3"/>
    <property type="match status" value="8"/>
</dbReference>
<dbReference type="PRINTS" id="PR00014">
    <property type="entry name" value="FNTYPEIII"/>
</dbReference>
<dbReference type="SMART" id="SM00060">
    <property type="entry name" value="FN3"/>
    <property type="match status" value="9"/>
</dbReference>
<dbReference type="SUPFAM" id="SSF49265">
    <property type="entry name" value="Fibronectin type III"/>
    <property type="match status" value="6"/>
</dbReference>
<dbReference type="PROSITE" id="PS50853">
    <property type="entry name" value="FN3"/>
    <property type="match status" value="9"/>
</dbReference>